<protein>
    <recommendedName>
        <fullName>Pantetheinase</fullName>
        <ecNumber evidence="1">3.5.1.92</ecNumber>
    </recommendedName>
    <alternativeName>
        <fullName>Pantetheine hydrolase</fullName>
    </alternativeName>
    <alternativeName>
        <fullName>Tiff66</fullName>
    </alternativeName>
    <alternativeName>
        <fullName>Vascular non-inflammatory molecule 1</fullName>
        <shortName>Vanin-1</shortName>
    </alternativeName>
</protein>
<name>VNN1_CANLF</name>
<organism>
    <name type="scientific">Canis lupus familiaris</name>
    <name type="common">Dog</name>
    <name type="synonym">Canis familiaris</name>
    <dbReference type="NCBI Taxonomy" id="9615"/>
    <lineage>
        <taxon>Eukaryota</taxon>
        <taxon>Metazoa</taxon>
        <taxon>Chordata</taxon>
        <taxon>Craniata</taxon>
        <taxon>Vertebrata</taxon>
        <taxon>Euteleostomi</taxon>
        <taxon>Mammalia</taxon>
        <taxon>Eutheria</taxon>
        <taxon>Laurasiatheria</taxon>
        <taxon>Carnivora</taxon>
        <taxon>Caniformia</taxon>
        <taxon>Canidae</taxon>
        <taxon>Canis</taxon>
    </lineage>
</organism>
<gene>
    <name type="primary">VNN1</name>
</gene>
<dbReference type="EC" id="3.5.1.92" evidence="1"/>
<dbReference type="EMBL" id="U39663">
    <property type="protein sequence ID" value="AAF21452.1"/>
    <property type="molecule type" value="mRNA"/>
</dbReference>
<dbReference type="RefSeq" id="NP_001003372.1">
    <property type="nucleotide sequence ID" value="NM_001003372.1"/>
</dbReference>
<dbReference type="RefSeq" id="XP_038509386.1">
    <property type="nucleotide sequence ID" value="XM_038653458.1"/>
</dbReference>
<dbReference type="RefSeq" id="XP_038509387.1">
    <property type="nucleotide sequence ID" value="XM_038653459.1"/>
</dbReference>
<dbReference type="RefSeq" id="XP_038509388.1">
    <property type="nucleotide sequence ID" value="XM_038653460.1"/>
</dbReference>
<dbReference type="RefSeq" id="XP_038509389.1">
    <property type="nucleotide sequence ID" value="XM_038653461.1"/>
</dbReference>
<dbReference type="RefSeq" id="XP_038509390.1">
    <property type="nucleotide sequence ID" value="XM_038653462.1"/>
</dbReference>
<dbReference type="RefSeq" id="XP_038509391.1">
    <property type="nucleotide sequence ID" value="XM_038653463.1"/>
</dbReference>
<dbReference type="SMR" id="Q9TSX8"/>
<dbReference type="FunCoup" id="Q9TSX8">
    <property type="interactions" value="1"/>
</dbReference>
<dbReference type="STRING" id="9615.ENSCAFP00000000268"/>
<dbReference type="GlyCosmos" id="Q9TSX8">
    <property type="glycosylation" value="5 sites, No reported glycans"/>
</dbReference>
<dbReference type="PaxDb" id="9612-ENSCAFP00000031722"/>
<dbReference type="Ensembl" id="ENSCAFT00845008456.1">
    <property type="protein sequence ID" value="ENSCAFP00845006661.1"/>
    <property type="gene ID" value="ENSCAFG00845004723.1"/>
</dbReference>
<dbReference type="Ensembl" id="ENSCAFT00845008537.1">
    <property type="protein sequence ID" value="ENSCAFP00845006737.1"/>
    <property type="gene ID" value="ENSCAFG00845004762.1"/>
</dbReference>
<dbReference type="GeneID" id="442973"/>
<dbReference type="KEGG" id="cfa:442973"/>
<dbReference type="CTD" id="8876"/>
<dbReference type="VEuPathDB" id="HostDB:ENSCAFG00845004723"/>
<dbReference type="VEuPathDB" id="HostDB:ENSCAFG00845004762"/>
<dbReference type="eggNOG" id="KOG0806">
    <property type="taxonomic scope" value="Eukaryota"/>
</dbReference>
<dbReference type="GeneTree" id="ENSGT00390000013823"/>
<dbReference type="InParanoid" id="Q9TSX8"/>
<dbReference type="OrthoDB" id="10250282at2759"/>
<dbReference type="Reactome" id="R-CFA-163125">
    <property type="pathway name" value="Post-translational modification: synthesis of GPI-anchored proteins"/>
</dbReference>
<dbReference type="Reactome" id="R-CFA-199220">
    <property type="pathway name" value="Vitamin B5 (pantothenate) metabolism"/>
</dbReference>
<dbReference type="Reactome" id="R-CFA-6798695">
    <property type="pathway name" value="Neutrophil degranulation"/>
</dbReference>
<dbReference type="Proteomes" id="UP000002254">
    <property type="component" value="Unplaced"/>
</dbReference>
<dbReference type="Proteomes" id="UP000694429">
    <property type="component" value="Unplaced"/>
</dbReference>
<dbReference type="Proteomes" id="UP000694542">
    <property type="component" value="Unplaced"/>
</dbReference>
<dbReference type="Proteomes" id="UP000805418">
    <property type="component" value="Chromosome 1"/>
</dbReference>
<dbReference type="GO" id="GO:0005886">
    <property type="term" value="C:plasma membrane"/>
    <property type="evidence" value="ECO:0007669"/>
    <property type="project" value="UniProtKB-SubCell"/>
</dbReference>
<dbReference type="GO" id="GO:0098552">
    <property type="term" value="C:side of membrane"/>
    <property type="evidence" value="ECO:0007669"/>
    <property type="project" value="UniProtKB-KW"/>
</dbReference>
<dbReference type="GO" id="GO:0017159">
    <property type="term" value="F:pantetheine hydrolase activity"/>
    <property type="evidence" value="ECO:0000250"/>
    <property type="project" value="UniProtKB"/>
</dbReference>
<dbReference type="GO" id="GO:0015939">
    <property type="term" value="P:pantothenate metabolic process"/>
    <property type="evidence" value="ECO:0000250"/>
    <property type="project" value="UniProtKB"/>
</dbReference>
<dbReference type="CDD" id="cd07567">
    <property type="entry name" value="biotinidase_like"/>
    <property type="match status" value="1"/>
</dbReference>
<dbReference type="FunFam" id="3.60.110.10:FF:000001">
    <property type="entry name" value="biotinidase isoform X1"/>
    <property type="match status" value="1"/>
</dbReference>
<dbReference type="Gene3D" id="3.60.110.10">
    <property type="entry name" value="Carbon-nitrogen hydrolase"/>
    <property type="match status" value="1"/>
</dbReference>
<dbReference type="InterPro" id="IPR012101">
    <property type="entry name" value="Biotinidase-like_euk"/>
</dbReference>
<dbReference type="InterPro" id="IPR040154">
    <property type="entry name" value="Biotinidase/VNN"/>
</dbReference>
<dbReference type="InterPro" id="IPR003010">
    <property type="entry name" value="C-N_Hydrolase"/>
</dbReference>
<dbReference type="InterPro" id="IPR036526">
    <property type="entry name" value="C-N_Hydrolase_sf"/>
</dbReference>
<dbReference type="InterPro" id="IPR043957">
    <property type="entry name" value="Vanin_C"/>
</dbReference>
<dbReference type="PANTHER" id="PTHR10609">
    <property type="entry name" value="BIOTINIDASE-RELATED"/>
    <property type="match status" value="1"/>
</dbReference>
<dbReference type="PANTHER" id="PTHR10609:SF16">
    <property type="entry name" value="PANTETHEINASE"/>
    <property type="match status" value="1"/>
</dbReference>
<dbReference type="Pfam" id="PF00795">
    <property type="entry name" value="CN_hydrolase"/>
    <property type="match status" value="1"/>
</dbReference>
<dbReference type="Pfam" id="PF19018">
    <property type="entry name" value="Vanin_C"/>
    <property type="match status" value="1"/>
</dbReference>
<dbReference type="PIRSF" id="PIRSF011861">
    <property type="entry name" value="Biotinidase"/>
    <property type="match status" value="1"/>
</dbReference>
<dbReference type="SUPFAM" id="SSF56317">
    <property type="entry name" value="Carbon-nitrogen hydrolase"/>
    <property type="match status" value="1"/>
</dbReference>
<dbReference type="PROSITE" id="PS50263">
    <property type="entry name" value="CN_HYDROLASE"/>
    <property type="match status" value="1"/>
</dbReference>
<evidence type="ECO:0000250" key="1">
    <source>
        <dbReference type="UniProtKB" id="O95497"/>
    </source>
</evidence>
<evidence type="ECO:0000255" key="2"/>
<evidence type="ECO:0000255" key="3">
    <source>
        <dbReference type="PROSITE-ProRule" id="PRU00054"/>
    </source>
</evidence>
<evidence type="ECO:0000305" key="4"/>
<comment type="function">
    <text evidence="1">Amidohydrolase that hydrolyzes specifically one of the carboamide linkages in D-pantetheine thus recycling pantothenic acid (vitamin B5) and releasing cysteamine.</text>
</comment>
<comment type="catalytic activity">
    <reaction evidence="1">
        <text>(R)-pantetheine + H2O = cysteamine + (R)-pantothenate</text>
        <dbReference type="Rhea" id="RHEA:13445"/>
        <dbReference type="ChEBI" id="CHEBI:15377"/>
        <dbReference type="ChEBI" id="CHEBI:16753"/>
        <dbReference type="ChEBI" id="CHEBI:29032"/>
        <dbReference type="ChEBI" id="CHEBI:58029"/>
        <dbReference type="EC" id="3.5.1.92"/>
    </reaction>
</comment>
<comment type="subunit">
    <text evidence="1">Monomer.</text>
</comment>
<comment type="subcellular location">
    <subcellularLocation>
        <location evidence="4">Cell membrane</location>
        <topology evidence="4">Lipid-anchor</topology>
        <topology evidence="4">GPI-anchor</topology>
    </subcellularLocation>
</comment>
<comment type="similarity">
    <text evidence="4">Belongs to the carbon-nitrogen hydrolase superfamily. BTD/VNN family.</text>
</comment>
<keyword id="KW-1003">Cell membrane</keyword>
<keyword id="KW-0325">Glycoprotein</keyword>
<keyword id="KW-0336">GPI-anchor</keyword>
<keyword id="KW-0378">Hydrolase</keyword>
<keyword id="KW-0449">Lipoprotein</keyword>
<keyword id="KW-0472">Membrane</keyword>
<keyword id="KW-1185">Reference proteome</keyword>
<keyword id="KW-0732">Signal</keyword>
<accession>Q9TSX8</accession>
<feature type="signal peptide" evidence="2">
    <location>
        <begin position="1"/>
        <end position="22"/>
    </location>
</feature>
<feature type="chain" id="PRO_0000019710" description="Pantetheinase">
    <location>
        <begin position="23"/>
        <end position="492"/>
    </location>
</feature>
<feature type="propeptide" id="PRO_0000019711" description="Removed in mature form" evidence="2">
    <location>
        <begin position="493"/>
        <end position="514"/>
    </location>
</feature>
<feature type="domain" description="CN hydrolase" evidence="3">
    <location>
        <begin position="40"/>
        <end position="307"/>
    </location>
</feature>
<feature type="active site" description="Proton acceptor" evidence="3">
    <location>
        <position position="80"/>
    </location>
</feature>
<feature type="active site" description="Proton donor" evidence="3">
    <location>
        <position position="179"/>
    </location>
</feature>
<feature type="active site" description="Nucleophile" evidence="3">
    <location>
        <position position="212"/>
    </location>
</feature>
<feature type="lipid moiety-binding region" description="GPI-anchor amidated aspartate" evidence="2">
    <location>
        <position position="492"/>
    </location>
</feature>
<feature type="glycosylation site" description="N-linked (GlcNAc...) asparagine" evidence="2">
    <location>
        <position position="39"/>
    </location>
</feature>
<feature type="glycosylation site" description="N-linked (GlcNAc...) asparagine" evidence="2">
    <location>
        <position position="87"/>
    </location>
</feature>
<feature type="glycosylation site" description="N-linked (GlcNAc...) asparagine" evidence="2">
    <location>
        <position position="147"/>
    </location>
</feature>
<feature type="glycosylation site" description="N-linked (GlcNAc...) asparagine" evidence="2">
    <location>
        <position position="316"/>
    </location>
</feature>
<feature type="glycosylation site" description="N-linked (GlcNAc...) asparagine" evidence="2">
    <location>
        <position position="354"/>
    </location>
</feature>
<reference key="1">
    <citation type="submission" date="1995-10" db="EMBL/GenBank/DDBJ databases">
        <title>Isolation and identification of canine TIFF66.</title>
        <authorList>
            <person name="Prehn S."/>
            <person name="Hartmann E."/>
            <person name="Fridrichson T."/>
            <person name="Henske A."/>
            <person name="Boehm S."/>
            <person name="Otto A."/>
            <person name="Ziesche W."/>
            <person name="Kurzchalia T."/>
        </authorList>
    </citation>
    <scope>NUCLEOTIDE SEQUENCE [MRNA]</scope>
    <source>
        <tissue>Lung</tissue>
    </source>
</reference>
<sequence length="514" mass="57432">MITSRLLVYVAVLVLCVIKVSSRDTFIAAVYEHAVKLPNATLVPVSHEEALAVMNQNLDLLEAAITSAANQGAHIIVTPEDGIYGWNFSRETIYPYLEDIPDPGVNWIPCNNPKRFGYTPVQERLSCLAKDNSIYVVANIGDKKPCNASDSQCPLDGRYQYNTDVVFDSQGKLVARYHKHNLFMGENQFNVPKKPEIVTFDTIFGRFGVFTCFDILFYDPAVTLVKDFHVDTIVFPTAWMNVLPHLSAIQFHSAWAMGMGVNFLASNIHHPSKRMTGSGIYAPDSPRAFHYDMKTKEGKLLLSQLDSYTHHPIVVNWTSYASGIKAFPTENQEFTGTAFFDEFTFLELTRVTGNYTVCQKKLCCHLSYKMSEKRTDEVYALGAFDGLHVVEGRYYLQICTLLKCKTAHVHTCGGAVETASTRFDMFSLSGTFGTQYVFPEVLLSETQLAPGEFQVSSDGRLFSMKPLSGPLLTVTLFGRIYEKDQTLKASSDPRSQVPGVMLLVIIPIVCSLSW</sequence>
<proteinExistence type="evidence at transcript level"/>